<evidence type="ECO:0000255" key="1">
    <source>
        <dbReference type="HAMAP-Rule" id="MF_00147"/>
    </source>
</evidence>
<evidence type="ECO:0000305" key="2"/>
<name>TPIS_LEIXX</name>
<dbReference type="EC" id="5.3.1.1" evidence="1"/>
<dbReference type="EMBL" id="AE016822">
    <property type="protein sequence ID" value="AAT89002.1"/>
    <property type="status" value="ALT_INIT"/>
    <property type="molecule type" value="Genomic_DNA"/>
</dbReference>
<dbReference type="SMR" id="Q6AF43"/>
<dbReference type="STRING" id="281090.Lxx11540"/>
<dbReference type="KEGG" id="lxx:Lxx11540"/>
<dbReference type="eggNOG" id="COG0149">
    <property type="taxonomic scope" value="Bacteria"/>
</dbReference>
<dbReference type="HOGENOM" id="CLU_024251_2_3_11"/>
<dbReference type="UniPathway" id="UPA00109">
    <property type="reaction ID" value="UER00189"/>
</dbReference>
<dbReference type="UniPathway" id="UPA00138"/>
<dbReference type="Proteomes" id="UP000001306">
    <property type="component" value="Chromosome"/>
</dbReference>
<dbReference type="GO" id="GO:0005829">
    <property type="term" value="C:cytosol"/>
    <property type="evidence" value="ECO:0007669"/>
    <property type="project" value="TreeGrafter"/>
</dbReference>
<dbReference type="GO" id="GO:0004807">
    <property type="term" value="F:triose-phosphate isomerase activity"/>
    <property type="evidence" value="ECO:0007669"/>
    <property type="project" value="UniProtKB-UniRule"/>
</dbReference>
<dbReference type="GO" id="GO:0006094">
    <property type="term" value="P:gluconeogenesis"/>
    <property type="evidence" value="ECO:0007669"/>
    <property type="project" value="UniProtKB-UniRule"/>
</dbReference>
<dbReference type="GO" id="GO:0046166">
    <property type="term" value="P:glyceraldehyde-3-phosphate biosynthetic process"/>
    <property type="evidence" value="ECO:0007669"/>
    <property type="project" value="TreeGrafter"/>
</dbReference>
<dbReference type="GO" id="GO:0019563">
    <property type="term" value="P:glycerol catabolic process"/>
    <property type="evidence" value="ECO:0007669"/>
    <property type="project" value="TreeGrafter"/>
</dbReference>
<dbReference type="GO" id="GO:0006096">
    <property type="term" value="P:glycolytic process"/>
    <property type="evidence" value="ECO:0007669"/>
    <property type="project" value="UniProtKB-UniRule"/>
</dbReference>
<dbReference type="CDD" id="cd00311">
    <property type="entry name" value="TIM"/>
    <property type="match status" value="1"/>
</dbReference>
<dbReference type="FunFam" id="3.20.20.70:FF:000016">
    <property type="entry name" value="Triosephosphate isomerase"/>
    <property type="match status" value="1"/>
</dbReference>
<dbReference type="Gene3D" id="3.20.20.70">
    <property type="entry name" value="Aldolase class I"/>
    <property type="match status" value="1"/>
</dbReference>
<dbReference type="HAMAP" id="MF_00147_B">
    <property type="entry name" value="TIM_B"/>
    <property type="match status" value="1"/>
</dbReference>
<dbReference type="InterPro" id="IPR013785">
    <property type="entry name" value="Aldolase_TIM"/>
</dbReference>
<dbReference type="InterPro" id="IPR035990">
    <property type="entry name" value="TIM_sf"/>
</dbReference>
<dbReference type="InterPro" id="IPR022896">
    <property type="entry name" value="TrioseP_Isoase_bac/euk"/>
</dbReference>
<dbReference type="InterPro" id="IPR000652">
    <property type="entry name" value="Triosephosphate_isomerase"/>
</dbReference>
<dbReference type="InterPro" id="IPR020861">
    <property type="entry name" value="Triosephosphate_isomerase_AS"/>
</dbReference>
<dbReference type="NCBIfam" id="TIGR00419">
    <property type="entry name" value="tim"/>
    <property type="match status" value="1"/>
</dbReference>
<dbReference type="PANTHER" id="PTHR21139">
    <property type="entry name" value="TRIOSEPHOSPHATE ISOMERASE"/>
    <property type="match status" value="1"/>
</dbReference>
<dbReference type="PANTHER" id="PTHR21139:SF42">
    <property type="entry name" value="TRIOSEPHOSPHATE ISOMERASE"/>
    <property type="match status" value="1"/>
</dbReference>
<dbReference type="Pfam" id="PF00121">
    <property type="entry name" value="TIM"/>
    <property type="match status" value="1"/>
</dbReference>
<dbReference type="SUPFAM" id="SSF51351">
    <property type="entry name" value="Triosephosphate isomerase (TIM)"/>
    <property type="match status" value="1"/>
</dbReference>
<dbReference type="PROSITE" id="PS00171">
    <property type="entry name" value="TIM_1"/>
    <property type="match status" value="1"/>
</dbReference>
<dbReference type="PROSITE" id="PS51440">
    <property type="entry name" value="TIM_2"/>
    <property type="match status" value="1"/>
</dbReference>
<proteinExistence type="inferred from homology"/>
<feature type="chain" id="PRO_0000090235" description="Triosephosphate isomerase">
    <location>
        <begin position="1"/>
        <end position="259"/>
    </location>
</feature>
<feature type="active site" description="Electrophile" evidence="1">
    <location>
        <position position="102"/>
    </location>
</feature>
<feature type="active site" description="Proton acceptor" evidence="1">
    <location>
        <position position="172"/>
    </location>
</feature>
<feature type="binding site" evidence="1">
    <location>
        <begin position="10"/>
        <end position="12"/>
    </location>
    <ligand>
        <name>substrate</name>
    </ligand>
</feature>
<feature type="binding site" evidence="1">
    <location>
        <position position="178"/>
    </location>
    <ligand>
        <name>substrate</name>
    </ligand>
</feature>
<feature type="binding site" evidence="1">
    <location>
        <position position="218"/>
    </location>
    <ligand>
        <name>substrate</name>
    </ligand>
</feature>
<feature type="binding site" evidence="1">
    <location>
        <begin position="239"/>
        <end position="240"/>
    </location>
    <ligand>
        <name>substrate</name>
    </ligand>
</feature>
<sequence>MRRVPLIAGNWKMNLDHLQSIAVVQKLAWTLKDAGHDFGAVEVAVFPPFTDLRSVQTLVAADKLPIAFGGQDVSEHDSGAYTGEIAASFLAALEARYVIIGHSERRTLHNETDEQVAAKTAQAVKNGISPIVCVGETAEDLEKHGASAVPVAQLRAALAGIDSAADFVVAYEPVWAIGSGQAATPEQAEQVAAALRAVIAEALGDEVAAKTRILYGGSVKSGNIAGFMRETNVDGALVGGASLDVAEFAAIIRYQKHVI</sequence>
<accession>Q6AF43</accession>
<organism>
    <name type="scientific">Leifsonia xyli subsp. xyli (strain CTCB07)</name>
    <dbReference type="NCBI Taxonomy" id="281090"/>
    <lineage>
        <taxon>Bacteria</taxon>
        <taxon>Bacillati</taxon>
        <taxon>Actinomycetota</taxon>
        <taxon>Actinomycetes</taxon>
        <taxon>Micrococcales</taxon>
        <taxon>Microbacteriaceae</taxon>
        <taxon>Leifsonia</taxon>
    </lineage>
</organism>
<gene>
    <name evidence="1" type="primary">tpiA</name>
    <name type="ordered locus">Lxx11540</name>
</gene>
<reference key="1">
    <citation type="journal article" date="2004" name="Mol. Plant Microbe Interact.">
        <title>The genome sequence of the Gram-positive sugarcane pathogen Leifsonia xyli subsp. xyli.</title>
        <authorList>
            <person name="Monteiro-Vitorello C.B."/>
            <person name="Camargo L.E.A."/>
            <person name="Van Sluys M.A."/>
            <person name="Kitajima J.P."/>
            <person name="Truffi D."/>
            <person name="do Amaral A.M."/>
            <person name="Harakava R."/>
            <person name="de Oliveira J.C.F."/>
            <person name="Wood D."/>
            <person name="de Oliveira M.C."/>
            <person name="Miyaki C.Y."/>
            <person name="Takita M.A."/>
            <person name="da Silva A.C.R."/>
            <person name="Furlan L.R."/>
            <person name="Carraro D.M."/>
            <person name="Camarotte G."/>
            <person name="Almeida N.F. Jr."/>
            <person name="Carrer H."/>
            <person name="Coutinho L.L."/>
            <person name="El-Dorry H.A."/>
            <person name="Ferro M.I.T."/>
            <person name="Gagliardi P.R."/>
            <person name="Giglioti E."/>
            <person name="Goldman M.H.S."/>
            <person name="Goldman G.H."/>
            <person name="Kimura E.T."/>
            <person name="Ferro E.S."/>
            <person name="Kuramae E.E."/>
            <person name="Lemos E.G.M."/>
            <person name="Lemos M.V.F."/>
            <person name="Mauro S.M.Z."/>
            <person name="Machado M.A."/>
            <person name="Marino C.L."/>
            <person name="Menck C.F."/>
            <person name="Nunes L.R."/>
            <person name="Oliveira R.C."/>
            <person name="Pereira G.G."/>
            <person name="Siqueira W."/>
            <person name="de Souza A.A."/>
            <person name="Tsai S.M."/>
            <person name="Zanca A.S."/>
            <person name="Simpson A.J.G."/>
            <person name="Brumbley S.M."/>
            <person name="Setubal J.C."/>
        </authorList>
    </citation>
    <scope>NUCLEOTIDE SEQUENCE [LARGE SCALE GENOMIC DNA]</scope>
    <source>
        <strain>CTCB07</strain>
    </source>
</reference>
<comment type="function">
    <text evidence="1">Involved in the gluconeogenesis. Catalyzes stereospecifically the conversion of dihydroxyacetone phosphate (DHAP) to D-glyceraldehyde-3-phosphate (G3P).</text>
</comment>
<comment type="catalytic activity">
    <reaction evidence="1">
        <text>D-glyceraldehyde 3-phosphate = dihydroxyacetone phosphate</text>
        <dbReference type="Rhea" id="RHEA:18585"/>
        <dbReference type="ChEBI" id="CHEBI:57642"/>
        <dbReference type="ChEBI" id="CHEBI:59776"/>
        <dbReference type="EC" id="5.3.1.1"/>
    </reaction>
</comment>
<comment type="pathway">
    <text evidence="1">Carbohydrate biosynthesis; gluconeogenesis.</text>
</comment>
<comment type="pathway">
    <text evidence="1">Carbohydrate degradation; glycolysis; D-glyceraldehyde 3-phosphate from glycerone phosphate: step 1/1.</text>
</comment>
<comment type="subunit">
    <text evidence="1">Homodimer.</text>
</comment>
<comment type="subcellular location">
    <subcellularLocation>
        <location evidence="1">Cytoplasm</location>
    </subcellularLocation>
</comment>
<comment type="similarity">
    <text evidence="1">Belongs to the triosephosphate isomerase family.</text>
</comment>
<comment type="sequence caution" evidence="2">
    <conflict type="erroneous initiation">
        <sequence resource="EMBL-CDS" id="AAT89002"/>
    </conflict>
</comment>
<protein>
    <recommendedName>
        <fullName evidence="1">Triosephosphate isomerase</fullName>
        <shortName evidence="1">TIM</shortName>
        <shortName evidence="1">TPI</shortName>
        <ecNumber evidence="1">5.3.1.1</ecNumber>
    </recommendedName>
    <alternativeName>
        <fullName evidence="1">Triose-phosphate isomerase</fullName>
    </alternativeName>
</protein>
<keyword id="KW-0963">Cytoplasm</keyword>
<keyword id="KW-0312">Gluconeogenesis</keyword>
<keyword id="KW-0324">Glycolysis</keyword>
<keyword id="KW-0413">Isomerase</keyword>
<keyword id="KW-1185">Reference proteome</keyword>